<comment type="catalytic activity">
    <reaction>
        <text>L-seryl-[protein] + ATP = O-phospho-L-seryl-[protein] + ADP + H(+)</text>
        <dbReference type="Rhea" id="RHEA:17989"/>
        <dbReference type="Rhea" id="RHEA-COMP:9863"/>
        <dbReference type="Rhea" id="RHEA-COMP:11604"/>
        <dbReference type="ChEBI" id="CHEBI:15378"/>
        <dbReference type="ChEBI" id="CHEBI:29999"/>
        <dbReference type="ChEBI" id="CHEBI:30616"/>
        <dbReference type="ChEBI" id="CHEBI:83421"/>
        <dbReference type="ChEBI" id="CHEBI:456216"/>
        <dbReference type="EC" id="2.7.11.22"/>
    </reaction>
</comment>
<comment type="catalytic activity">
    <reaction>
        <text>L-threonyl-[protein] + ATP = O-phospho-L-threonyl-[protein] + ADP + H(+)</text>
        <dbReference type="Rhea" id="RHEA:46608"/>
        <dbReference type="Rhea" id="RHEA-COMP:11060"/>
        <dbReference type="Rhea" id="RHEA-COMP:11605"/>
        <dbReference type="ChEBI" id="CHEBI:15378"/>
        <dbReference type="ChEBI" id="CHEBI:30013"/>
        <dbReference type="ChEBI" id="CHEBI:30616"/>
        <dbReference type="ChEBI" id="CHEBI:61977"/>
        <dbReference type="ChEBI" id="CHEBI:456216"/>
        <dbReference type="EC" id="2.7.11.22"/>
    </reaction>
</comment>
<comment type="interaction">
    <interactant intactId="EBI-3919850">
        <id>Q8IVW4</id>
    </interactant>
    <interactant intactId="EBI-3044060">
        <id>Q8WYN0</id>
        <label>ATG4A</label>
    </interactant>
    <organismsDiffer>false</organismsDiffer>
    <experiments>3</experiments>
</comment>
<comment type="interaction">
    <interactant intactId="EBI-3919850">
        <id>Q8IVW4</id>
    </interactant>
    <interactant intactId="EBI-3867333">
        <id>A8MQ03</id>
        <label>CYSRT1</label>
    </interactant>
    <organismsDiffer>false</organismsDiffer>
    <experiments>3</experiments>
</comment>
<comment type="interaction">
    <interactant intactId="EBI-3919850">
        <id>Q8IVW4</id>
    </interactant>
    <interactant intactId="EBI-11988027">
        <id>Q9NRI5-2</id>
        <label>DISC1</label>
    </interactant>
    <organismsDiffer>false</organismsDiffer>
    <experiments>3</experiments>
</comment>
<comment type="interaction">
    <interactant intactId="EBI-3919850">
        <id>Q8IVW4</id>
    </interactant>
    <interactant intactId="EBI-10239299">
        <id>Q9NQM4</id>
        <label>DNAAF6</label>
    </interactant>
    <organismsDiffer>false</organismsDiffer>
    <experiments>3</experiments>
</comment>
<comment type="interaction">
    <interactant intactId="EBI-3919850">
        <id>Q8IVW4</id>
    </interactant>
    <interactant intactId="EBI-11022345">
        <id>P51114-2</id>
        <label>FXR1</label>
    </interactant>
    <organismsDiffer>false</organismsDiffer>
    <experiments>3</experiments>
</comment>
<comment type="interaction">
    <interactant intactId="EBI-3919850">
        <id>Q8IVW4</id>
    </interactant>
    <interactant intactId="EBI-740459">
        <id>P51116</id>
        <label>FXR2</label>
    </interactant>
    <organismsDiffer>false</organismsDiffer>
    <experiments>7</experiments>
</comment>
<comment type="interaction">
    <interactant intactId="EBI-3919850">
        <id>Q8IVW4</id>
    </interactant>
    <interactant intactId="EBI-618309">
        <id>Q08379</id>
        <label>GOLGA2</label>
    </interactant>
    <organismsDiffer>false</organismsDiffer>
    <experiments>3</experiments>
</comment>
<comment type="interaction">
    <interactant intactId="EBI-3919850">
        <id>Q8IVW4</id>
    </interactant>
    <interactant intactId="EBI-11522367">
        <id>Q13422-7</id>
        <label>IKZF1</label>
    </interactant>
    <organismsDiffer>false</organismsDiffer>
    <experiments>3</experiments>
</comment>
<comment type="interaction">
    <interactant intactId="EBI-3919850">
        <id>Q8IVW4</id>
    </interactant>
    <interactant intactId="EBI-2556193">
        <id>Q63ZY3</id>
        <label>KANK2</label>
    </interactant>
    <organismsDiffer>false</organismsDiffer>
    <experiments>3</experiments>
</comment>
<comment type="interaction">
    <interactant intactId="EBI-3919850">
        <id>Q8IVW4</id>
    </interactant>
    <interactant intactId="EBI-749265">
        <id>Q8N6L0</id>
        <label>KASH5</label>
    </interactant>
    <organismsDiffer>false</organismsDiffer>
    <experiments>3</experiments>
</comment>
<comment type="interaction">
    <interactant intactId="EBI-3919850">
        <id>Q8IVW4</id>
    </interactant>
    <interactant intactId="EBI-10172052">
        <id>P60411</id>
        <label>KRTAP10-9</label>
    </interactant>
    <organismsDiffer>false</organismsDiffer>
    <experiments>3</experiments>
</comment>
<comment type="interaction">
    <interactant intactId="EBI-3919850">
        <id>Q8IVW4</id>
    </interactant>
    <interactant intactId="EBI-18273118">
        <id>Q9P2M1</id>
        <label>LRP2BP</label>
    </interactant>
    <organismsDiffer>false</organismsDiffer>
    <experiments>3</experiments>
</comment>
<comment type="interaction">
    <interactant intactId="EBI-3919850">
        <id>Q8IVW4</id>
    </interactant>
    <interactant intactId="EBI-741037">
        <id>Q9BRK4</id>
        <label>LZTS2</label>
    </interactant>
    <organismsDiffer>false</organismsDiffer>
    <experiments>3</experiments>
</comment>
<comment type="interaction">
    <interactant intactId="EBI-3919850">
        <id>Q8IVW4</id>
    </interactant>
    <interactant intactId="EBI-307531">
        <id>P23508</id>
        <label>MCC</label>
    </interactant>
    <organismsDiffer>false</organismsDiffer>
    <experiments>3</experiments>
</comment>
<comment type="interaction">
    <interactant intactId="EBI-3919850">
        <id>Q8IVW4</id>
    </interactant>
    <interactant intactId="EBI-724076">
        <id>Q99750</id>
        <label>MDFI</label>
    </interactant>
    <organismsDiffer>false</organismsDiffer>
    <experiments>3</experiments>
</comment>
<comment type="interaction">
    <interactant intactId="EBI-3919850">
        <id>Q8IVW4</id>
    </interactant>
    <interactant intactId="EBI-742948">
        <id>Q5JR59</id>
        <label>MTUS2</label>
    </interactant>
    <organismsDiffer>false</organismsDiffer>
    <experiments>3</experiments>
</comment>
<comment type="interaction">
    <interactant intactId="EBI-3919850">
        <id>Q8IVW4</id>
    </interactant>
    <interactant intactId="EBI-11522433">
        <id>Q5JR59-3</id>
        <label>MTUS2</label>
    </interactant>
    <organismsDiffer>false</organismsDiffer>
    <experiments>4</experiments>
</comment>
<comment type="interaction">
    <interactant intactId="EBI-3919850">
        <id>Q8IVW4</id>
    </interactant>
    <interactant intactId="EBI-79165">
        <id>Q9NRD5</id>
        <label>PICK1</label>
    </interactant>
    <organismsDiffer>false</organismsDiffer>
    <experiments>3</experiments>
</comment>
<comment type="interaction">
    <interactant intactId="EBI-3919850">
        <id>Q8IVW4</id>
    </interactant>
    <interactant intactId="EBI-10232538">
        <id>Q8WWB5</id>
        <label>PIH1D2</label>
    </interactant>
    <organismsDiffer>false</organismsDiffer>
    <experiments>3</experiments>
</comment>
<comment type="interaction">
    <interactant intactId="EBI-3919850">
        <id>Q8IVW4</id>
    </interactant>
    <interactant intactId="EBI-447043">
        <id>Q15276</id>
        <label>RABEP1</label>
    </interactant>
    <organismsDiffer>false</organismsDiffer>
    <experiments>3</experiments>
</comment>
<comment type="interaction">
    <interactant intactId="EBI-3919850">
        <id>Q8IVW4</id>
    </interactant>
    <interactant intactId="EBI-396676">
        <id>O95630</id>
        <label>STAMBP</label>
    </interactant>
    <organismsDiffer>false</organismsDiffer>
    <experiments>2</experiments>
</comment>
<comment type="interaction">
    <interactant intactId="EBI-3919850">
        <id>Q8IVW4</id>
    </interactant>
    <interactant intactId="EBI-719493">
        <id>P14373</id>
        <label>TRIM27</label>
    </interactant>
    <organismsDiffer>false</organismsDiffer>
    <experiments>6</experiments>
</comment>
<comment type="interaction">
    <interactant intactId="EBI-3919850">
        <id>Q8IVW4</id>
    </interactant>
    <interactant intactId="EBI-741602">
        <id>O94972</id>
        <label>TRIM37</label>
    </interactant>
    <organismsDiffer>false</organismsDiffer>
    <experiments>3</experiments>
</comment>
<comment type="interaction">
    <interactant intactId="EBI-3919850">
        <id>Q8IVW4</id>
    </interactant>
    <interactant intactId="EBI-10176632">
        <id>O43829</id>
        <label>ZBTB14</label>
    </interactant>
    <organismsDiffer>false</organismsDiffer>
    <experiments>3</experiments>
</comment>
<comment type="interaction">
    <interactant intactId="EBI-3919850">
        <id>Q8IVW4</id>
    </interactant>
    <interactant intactId="EBI-740718">
        <id>O43298</id>
        <label>ZBTB43</label>
    </interactant>
    <organismsDiffer>false</organismsDiffer>
    <experiments>3</experiments>
</comment>
<comment type="interaction">
    <interactant intactId="EBI-3919850">
        <id>Q8IVW4</id>
    </interactant>
    <interactant intactId="EBI-742740">
        <id>Q96BR9</id>
        <label>ZBTB8A</label>
    </interactant>
    <organismsDiffer>false</organismsDiffer>
    <experiments>6</experiments>
</comment>
<comment type="interaction">
    <interactant intactId="EBI-3919850">
        <id>Q8IVW4</id>
    </interactant>
    <interactant intactId="EBI-527853">
        <id>Q9UGI0</id>
        <label>ZRANB1</label>
    </interactant>
    <organismsDiffer>false</organismsDiffer>
    <experiments>3</experiments>
</comment>
<comment type="subcellular location">
    <subcellularLocation>
        <location evidence="1">Cytoplasm</location>
    </subcellularLocation>
</comment>
<comment type="alternative products">
    <event type="alternative splicing"/>
    <isoform>
        <id>Q8IVW4-1</id>
        <name>1</name>
        <sequence type="displayed"/>
    </isoform>
    <isoform>
        <id>Q8IVW4-2</id>
        <name>2</name>
        <sequence type="described" ref="VSP_016148"/>
    </isoform>
</comment>
<comment type="domain">
    <text>The [NKR]KIAxRE motif seems to be a cyclin-binding region.</text>
</comment>
<comment type="similarity">
    <text evidence="8">Belongs to the protein kinase superfamily. CMGC Ser/Thr protein kinase family. CDC2/CDKX subfamily.</text>
</comment>
<name>CDKL3_HUMAN</name>
<evidence type="ECO:0000250" key="1"/>
<evidence type="ECO:0000250" key="2">
    <source>
        <dbReference type="UniProtKB" id="Q9JM01"/>
    </source>
</evidence>
<evidence type="ECO:0000255" key="3">
    <source>
        <dbReference type="PROSITE-ProRule" id="PRU00159"/>
    </source>
</evidence>
<evidence type="ECO:0000255" key="4">
    <source>
        <dbReference type="PROSITE-ProRule" id="PRU10027"/>
    </source>
</evidence>
<evidence type="ECO:0000256" key="5">
    <source>
        <dbReference type="SAM" id="MobiDB-lite"/>
    </source>
</evidence>
<evidence type="ECO:0000269" key="6">
    <source>
    </source>
</evidence>
<evidence type="ECO:0000303" key="7">
    <source ref="1"/>
</evidence>
<evidence type="ECO:0000305" key="8"/>
<evidence type="ECO:0000312" key="9">
    <source>
        <dbReference type="HGNC" id="HGNC:15483"/>
    </source>
</evidence>
<evidence type="ECO:0007744" key="10">
    <source>
        <dbReference type="PDB" id="3ZDU"/>
    </source>
</evidence>
<evidence type="ECO:0007829" key="11">
    <source>
        <dbReference type="PDB" id="3ZDU"/>
    </source>
</evidence>
<accession>Q8IVW4</accession>
<accession>D3DQA0</accession>
<accession>D3DQA1</accession>
<accession>Q9P114</accession>
<gene>
    <name evidence="9" type="primary">CDKL3</name>
    <name evidence="7" type="synonym">NKIAMRE</name>
</gene>
<protein>
    <recommendedName>
        <fullName evidence="8">Cyclin-dependent kinase-like 3</fullName>
        <ecNumber>2.7.11.22</ecNumber>
    </recommendedName>
    <alternativeName>
        <fullName>Serine/threonine-protein kinase NKIAMRE</fullName>
    </alternativeName>
</protein>
<reference key="1">
    <citation type="submission" date="1999-02" db="EMBL/GenBank/DDBJ databases">
        <title>NKIAMRE a novel kinase deleted in human leukemia.</title>
        <authorList>
            <person name="Midmer M."/>
            <person name="Haq R."/>
            <person name="Zanke B.W."/>
        </authorList>
    </citation>
    <scope>NUCLEOTIDE SEQUENCE [MRNA] (ISOFORM 2)</scope>
    <source>
        <tissue>Fetal heart</tissue>
    </source>
</reference>
<reference key="2">
    <citation type="submission" date="2005-09" db="EMBL/GenBank/DDBJ databases">
        <authorList>
            <person name="Mural R.J."/>
            <person name="Istrail S."/>
            <person name="Sutton G.G."/>
            <person name="Florea L."/>
            <person name="Halpern A.L."/>
            <person name="Mobarry C.M."/>
            <person name="Lippert R."/>
            <person name="Walenz B."/>
            <person name="Shatkay H."/>
            <person name="Dew I."/>
            <person name="Miller J.R."/>
            <person name="Flanigan M.J."/>
            <person name="Edwards N.J."/>
            <person name="Bolanos R."/>
            <person name="Fasulo D."/>
            <person name="Halldorsson B.V."/>
            <person name="Hannenhalli S."/>
            <person name="Turner R."/>
            <person name="Yooseph S."/>
            <person name="Lu F."/>
            <person name="Nusskern D.R."/>
            <person name="Shue B.C."/>
            <person name="Zheng X.H."/>
            <person name="Zhong F."/>
            <person name="Delcher A.L."/>
            <person name="Huson D.H."/>
            <person name="Kravitz S.A."/>
            <person name="Mouchard L."/>
            <person name="Reinert K."/>
            <person name="Remington K.A."/>
            <person name="Clark A.G."/>
            <person name="Waterman M.S."/>
            <person name="Eichler E.E."/>
            <person name="Adams M.D."/>
            <person name="Hunkapiller M.W."/>
            <person name="Myers E.W."/>
            <person name="Venter J.C."/>
        </authorList>
    </citation>
    <scope>NUCLEOTIDE SEQUENCE [LARGE SCALE GENOMIC DNA]</scope>
</reference>
<reference key="3">
    <citation type="journal article" date="2004" name="Genome Res.">
        <title>The status, quality, and expansion of the NIH full-length cDNA project: the Mammalian Gene Collection (MGC).</title>
        <authorList>
            <consortium name="The MGC Project Team"/>
        </authorList>
    </citation>
    <scope>NUCLEOTIDE SEQUENCE [LARGE SCALE MRNA] (ISOFORM 1)</scope>
    <source>
        <tissue>Testis</tissue>
    </source>
</reference>
<reference evidence="10" key="4">
    <citation type="journal article" date="2018" name="Cell Rep.">
        <title>CDKL Family Kinases Have Evolved Distinct Structural Features and Ciliary Function.</title>
        <authorList>
            <person name="Canning P."/>
            <person name="Park K."/>
            <person name="Goncalves J."/>
            <person name="Li C."/>
            <person name="Howard C.J."/>
            <person name="Sharpe T.D."/>
            <person name="Holt L.J."/>
            <person name="Pelletier L."/>
            <person name="Bullock A.N."/>
            <person name="Leroux M.R."/>
        </authorList>
    </citation>
    <scope>X-RAY CRYSTALLOGRAPHY (2.20 ANGSTROMS) OF 1-324 IN COMPLEX WITH SYNTHETIC INHIBITOR</scope>
</reference>
<reference key="5">
    <citation type="journal article" date="2007" name="Nature">
        <title>Patterns of somatic mutation in human cancer genomes.</title>
        <authorList>
            <person name="Greenman C."/>
            <person name="Stephens P."/>
            <person name="Smith R."/>
            <person name="Dalgliesh G.L."/>
            <person name="Hunter C."/>
            <person name="Bignell G."/>
            <person name="Davies H."/>
            <person name="Teague J."/>
            <person name="Butler A."/>
            <person name="Stevens C."/>
            <person name="Edkins S."/>
            <person name="O'Meara S."/>
            <person name="Vastrik I."/>
            <person name="Schmidt E.E."/>
            <person name="Avis T."/>
            <person name="Barthorpe S."/>
            <person name="Bhamra G."/>
            <person name="Buck G."/>
            <person name="Choudhury B."/>
            <person name="Clements J."/>
            <person name="Cole J."/>
            <person name="Dicks E."/>
            <person name="Forbes S."/>
            <person name="Gray K."/>
            <person name="Halliday K."/>
            <person name="Harrison R."/>
            <person name="Hills K."/>
            <person name="Hinton J."/>
            <person name="Jenkinson A."/>
            <person name="Jones D."/>
            <person name="Menzies A."/>
            <person name="Mironenko T."/>
            <person name="Perry J."/>
            <person name="Raine K."/>
            <person name="Richardson D."/>
            <person name="Shepherd R."/>
            <person name="Small A."/>
            <person name="Tofts C."/>
            <person name="Varian J."/>
            <person name="Webb T."/>
            <person name="West S."/>
            <person name="Widaa S."/>
            <person name="Yates A."/>
            <person name="Cahill D.P."/>
            <person name="Louis D.N."/>
            <person name="Goldstraw P."/>
            <person name="Nicholson A.G."/>
            <person name="Brasseur F."/>
            <person name="Looijenga L."/>
            <person name="Weber B.L."/>
            <person name="Chiew Y.-E."/>
            <person name="DeFazio A."/>
            <person name="Greaves M.F."/>
            <person name="Green A.R."/>
            <person name="Campbell P."/>
            <person name="Birney E."/>
            <person name="Easton D.F."/>
            <person name="Chenevix-Trench G."/>
            <person name="Tan M.-H."/>
            <person name="Khoo S.K."/>
            <person name="Teh B.T."/>
            <person name="Yuen S.T."/>
            <person name="Leung S.Y."/>
            <person name="Wooster R."/>
            <person name="Futreal P.A."/>
            <person name="Stratton M.R."/>
        </authorList>
    </citation>
    <scope>VARIANT [LARGE SCALE ANALYSIS] THR-394</scope>
</reference>
<keyword id="KW-0002">3D-structure</keyword>
<keyword id="KW-0025">Alternative splicing</keyword>
<keyword id="KW-0067">ATP-binding</keyword>
<keyword id="KW-0963">Cytoplasm</keyword>
<keyword id="KW-0418">Kinase</keyword>
<keyword id="KW-0547">Nucleotide-binding</keyword>
<keyword id="KW-0597">Phosphoprotein</keyword>
<keyword id="KW-1267">Proteomics identification</keyword>
<keyword id="KW-1185">Reference proteome</keyword>
<keyword id="KW-0723">Serine/threonine-protein kinase</keyword>
<keyword id="KW-0808">Transferase</keyword>
<feature type="chain" id="PRO_0000085820" description="Cyclin-dependent kinase-like 3">
    <location>
        <begin position="1"/>
        <end position="592"/>
    </location>
</feature>
<feature type="domain" description="Protein kinase" evidence="3">
    <location>
        <begin position="4"/>
        <end position="286"/>
    </location>
</feature>
<feature type="region of interest" description="Disordered" evidence="5">
    <location>
        <begin position="368"/>
        <end position="390"/>
    </location>
</feature>
<feature type="region of interest" description="Disordered" evidence="5">
    <location>
        <begin position="459"/>
        <end position="485"/>
    </location>
</feature>
<feature type="short sequence motif" description="[NKR]KIAxRE">
    <location>
        <begin position="44"/>
        <end position="50"/>
    </location>
</feature>
<feature type="compositionally biased region" description="Basic and acidic residues" evidence="5">
    <location>
        <begin position="368"/>
        <end position="379"/>
    </location>
</feature>
<feature type="compositionally biased region" description="Polar residues" evidence="5">
    <location>
        <begin position="466"/>
        <end position="477"/>
    </location>
</feature>
<feature type="active site" description="Proton acceptor" evidence="3 4">
    <location>
        <position position="125"/>
    </location>
</feature>
<feature type="binding site" evidence="3">
    <location>
        <begin position="10"/>
        <end position="18"/>
    </location>
    <ligand>
        <name>ATP</name>
        <dbReference type="ChEBI" id="CHEBI:30616"/>
    </ligand>
</feature>
<feature type="binding site" evidence="3">
    <location>
        <position position="33"/>
    </location>
    <ligand>
        <name>ATP</name>
        <dbReference type="ChEBI" id="CHEBI:30616"/>
    </ligand>
</feature>
<feature type="modified residue" description="Phosphothreonine" evidence="2">
    <location>
        <position position="158"/>
    </location>
</feature>
<feature type="modified residue" description="Phosphotyrosine" evidence="2">
    <location>
        <position position="160"/>
    </location>
</feature>
<feature type="splice variant" id="VSP_016148" description="In isoform 2." evidence="7">
    <location>
        <begin position="456"/>
        <end position="592"/>
    </location>
</feature>
<feature type="sequence variant" id="VAR_041991" description="In dbSNP:rs35687772." evidence="6">
    <original>M</original>
    <variation>T</variation>
    <location>
        <position position="394"/>
    </location>
</feature>
<feature type="sequence conflict" description="In Ref. 1; AAF36509." evidence="8" ref="1">
    <original>K</original>
    <variation>E</variation>
    <location>
        <position position="345"/>
    </location>
</feature>
<feature type="strand" evidence="11">
    <location>
        <begin position="4"/>
        <end position="13"/>
    </location>
</feature>
<feature type="strand" evidence="11">
    <location>
        <begin position="16"/>
        <end position="23"/>
    </location>
</feature>
<feature type="turn" evidence="11">
    <location>
        <begin position="24"/>
        <end position="26"/>
    </location>
</feature>
<feature type="strand" evidence="11">
    <location>
        <begin position="29"/>
        <end position="34"/>
    </location>
</feature>
<feature type="helix" evidence="11">
    <location>
        <begin position="45"/>
        <end position="56"/>
    </location>
</feature>
<feature type="strand" evidence="11">
    <location>
        <begin position="65"/>
        <end position="69"/>
    </location>
</feature>
<feature type="strand" evidence="11">
    <location>
        <begin position="72"/>
        <end position="74"/>
    </location>
</feature>
<feature type="strand" evidence="11">
    <location>
        <begin position="76"/>
        <end position="80"/>
    </location>
</feature>
<feature type="strand" evidence="11">
    <location>
        <begin position="83"/>
        <end position="85"/>
    </location>
</feature>
<feature type="helix" evidence="11">
    <location>
        <begin position="86"/>
        <end position="92"/>
    </location>
</feature>
<feature type="helix" evidence="11">
    <location>
        <begin position="99"/>
        <end position="118"/>
    </location>
</feature>
<feature type="helix" evidence="11">
    <location>
        <begin position="128"/>
        <end position="130"/>
    </location>
</feature>
<feature type="strand" evidence="11">
    <location>
        <begin position="131"/>
        <end position="133"/>
    </location>
</feature>
<feature type="strand" evidence="11">
    <location>
        <begin position="139"/>
        <end position="141"/>
    </location>
</feature>
<feature type="helix" evidence="11">
    <location>
        <begin position="161"/>
        <end position="164"/>
    </location>
</feature>
<feature type="helix" evidence="11">
    <location>
        <begin position="169"/>
        <end position="172"/>
    </location>
</feature>
<feature type="helix" evidence="11">
    <location>
        <begin position="181"/>
        <end position="196"/>
    </location>
</feature>
<feature type="helix" evidence="11">
    <location>
        <begin position="206"/>
        <end position="216"/>
    </location>
</feature>
<feature type="helix" evidence="11">
    <location>
        <begin position="222"/>
        <end position="230"/>
    </location>
</feature>
<feature type="helix" evidence="11">
    <location>
        <begin position="232"/>
        <end position="234"/>
    </location>
</feature>
<feature type="helix" evidence="11">
    <location>
        <begin position="248"/>
        <end position="251"/>
    </location>
</feature>
<feature type="helix" evidence="11">
    <location>
        <begin position="257"/>
        <end position="266"/>
    </location>
</feature>
<feature type="helix" evidence="11">
    <location>
        <begin position="271"/>
        <end position="273"/>
    </location>
</feature>
<feature type="helix" evidence="11">
    <location>
        <begin position="277"/>
        <end position="281"/>
    </location>
</feature>
<feature type="helix" evidence="11">
    <location>
        <begin position="284"/>
        <end position="287"/>
    </location>
</feature>
<feature type="helix" evidence="11">
    <location>
        <begin position="291"/>
        <end position="308"/>
    </location>
</feature>
<organism>
    <name type="scientific">Homo sapiens</name>
    <name type="common">Human</name>
    <dbReference type="NCBI Taxonomy" id="9606"/>
    <lineage>
        <taxon>Eukaryota</taxon>
        <taxon>Metazoa</taxon>
        <taxon>Chordata</taxon>
        <taxon>Craniata</taxon>
        <taxon>Vertebrata</taxon>
        <taxon>Euteleostomi</taxon>
        <taxon>Mammalia</taxon>
        <taxon>Eutheria</taxon>
        <taxon>Euarchontoglires</taxon>
        <taxon>Primates</taxon>
        <taxon>Haplorrhini</taxon>
        <taxon>Catarrhini</taxon>
        <taxon>Hominidae</taxon>
        <taxon>Homo</taxon>
    </lineage>
</organism>
<proteinExistence type="evidence at protein level"/>
<sequence>MEMYETLGKVGEGSYGTVMKCKHKNTGQIVAIKIFYERPEQSVNKIAMREIKFLKQFHHENLVNLIEVFRQKKKIHLVFEFIDHTVLDELQHYCHGLESKRLRKYLFQILRAIDYLHSNNIIHRDIKPENILVSQSGITKLCDFGFARTLAAPGDIYTDYVATRWYRAPELVLKDTSYGKPVDIWALGCMIIEMATGNPYLPSSSDLDLLHKIVLKVGNLSPHLQNIFSKSPIFAGVVLPQVQHPKNARKKYPKLNGLLADIVHACLQIDPADRISSSDLLHHEYFTRDGFIEKFMPELKAKLLQEAKVNSLIKPKESSKENELRKDERKTVYTNTLLSSSVLGKEIEKEKKPKEIKVRVIKVKGGRGDISEPKKKEYEGGLGQQDANENVHPMSPDTKLVTIEPPNPINPSTNCNGLKENPHCGGSVTMPPINLTNSNLMAANLSSNLFHPSVRLTERAKKRRTSSQSIGQVMPNSRQEDPGPIQSQMEKGIFNERTGHSDQMANENKRKLNFSRSDRKEFHFPELPVTIQSKDTKGMEVKQIKMLKRESKKTESSKIPTLLNVDQNQEKQEGGDGHCEGKNLKRNRFFFW</sequence>
<dbReference type="EC" id="2.7.11.22"/>
<dbReference type="EMBL" id="AF130372">
    <property type="protein sequence ID" value="AAF36509.1"/>
    <property type="molecule type" value="mRNA"/>
</dbReference>
<dbReference type="EMBL" id="CH471062">
    <property type="protein sequence ID" value="EAW62263.1"/>
    <property type="molecule type" value="Genomic_DNA"/>
</dbReference>
<dbReference type="EMBL" id="CH471062">
    <property type="protein sequence ID" value="EAW62264.1"/>
    <property type="molecule type" value="Genomic_DNA"/>
</dbReference>
<dbReference type="EMBL" id="CH471062">
    <property type="protein sequence ID" value="EAW62265.1"/>
    <property type="molecule type" value="Genomic_DNA"/>
</dbReference>
<dbReference type="EMBL" id="CH471062">
    <property type="protein sequence ID" value="EAW62266.1"/>
    <property type="molecule type" value="Genomic_DNA"/>
</dbReference>
<dbReference type="EMBL" id="BC041799">
    <property type="protein sequence ID" value="AAH41799.1"/>
    <property type="molecule type" value="mRNA"/>
</dbReference>
<dbReference type="CCDS" id="CCDS47264.1">
    <molecule id="Q8IVW4-1"/>
</dbReference>
<dbReference type="CCDS" id="CCDS47265.1">
    <molecule id="Q8IVW4-2"/>
</dbReference>
<dbReference type="RefSeq" id="NP_001107047.1">
    <molecule id="Q8IVW4-1"/>
    <property type="nucleotide sequence ID" value="NM_001113575.2"/>
</dbReference>
<dbReference type="RefSeq" id="NP_001287782.1">
    <property type="nucleotide sequence ID" value="NM_001300853.1"/>
</dbReference>
<dbReference type="RefSeq" id="NP_057592.2">
    <molecule id="Q8IVW4-2"/>
    <property type="nucleotide sequence ID" value="NM_016508.4"/>
</dbReference>
<dbReference type="RefSeq" id="XP_016865024.1">
    <property type="nucleotide sequence ID" value="XM_017009535.1"/>
</dbReference>
<dbReference type="PDB" id="3ZDU">
    <property type="method" value="X-ray"/>
    <property type="resolution" value="2.20 A"/>
    <property type="chains" value="A=1-324"/>
</dbReference>
<dbReference type="PDBsum" id="3ZDU"/>
<dbReference type="SMR" id="Q8IVW4"/>
<dbReference type="BioGRID" id="119419">
    <property type="interactions" value="87"/>
</dbReference>
<dbReference type="FunCoup" id="Q8IVW4">
    <property type="interactions" value="1203"/>
</dbReference>
<dbReference type="IntAct" id="Q8IVW4">
    <property type="interactions" value="61"/>
</dbReference>
<dbReference type="STRING" id="9606.ENSP00000265334"/>
<dbReference type="BindingDB" id="Q8IVW4"/>
<dbReference type="ChEMBL" id="CHEMBL1163117"/>
<dbReference type="DrugCentral" id="Q8IVW4"/>
<dbReference type="iPTMnet" id="Q8IVW4"/>
<dbReference type="PhosphoSitePlus" id="Q8IVW4"/>
<dbReference type="BioMuta" id="CDKL3"/>
<dbReference type="DMDM" id="74762479"/>
<dbReference type="jPOST" id="Q8IVW4"/>
<dbReference type="MassIVE" id="Q8IVW4"/>
<dbReference type="PaxDb" id="9606-ENSP00000265334"/>
<dbReference type="PeptideAtlas" id="Q8IVW4"/>
<dbReference type="ProteomicsDB" id="70783">
    <molecule id="Q8IVW4-1"/>
</dbReference>
<dbReference type="ProteomicsDB" id="70784">
    <molecule id="Q8IVW4-2"/>
</dbReference>
<dbReference type="Antibodypedia" id="2061">
    <property type="antibodies" value="203 antibodies from 29 providers"/>
</dbReference>
<dbReference type="DNASU" id="51265"/>
<dbReference type="Ensembl" id="ENST00000265334.9">
    <molecule id="Q8IVW4-1"/>
    <property type="protein sequence ID" value="ENSP00000265334.4"/>
    <property type="gene ID" value="ENSG00000006837.12"/>
</dbReference>
<dbReference type="Ensembl" id="ENST00000523832.1">
    <molecule id="Q8IVW4-2"/>
    <property type="protein sequence ID" value="ENSP00000430496.1"/>
    <property type="gene ID" value="ENSG00000006837.12"/>
</dbReference>
<dbReference type="GeneID" id="51265"/>
<dbReference type="KEGG" id="hsa:51265"/>
<dbReference type="MANE-Select" id="ENST00000265334.9">
    <property type="protein sequence ID" value="ENSP00000265334.4"/>
    <property type="RefSeq nucleotide sequence ID" value="NM_001113575.2"/>
    <property type="RefSeq protein sequence ID" value="NP_001107047.1"/>
</dbReference>
<dbReference type="UCSC" id="uc003kzf.5">
    <molecule id="Q8IVW4-1"/>
    <property type="organism name" value="human"/>
</dbReference>
<dbReference type="AGR" id="HGNC:15483"/>
<dbReference type="CTD" id="51265"/>
<dbReference type="DisGeNET" id="51265"/>
<dbReference type="GeneCards" id="CDKL3"/>
<dbReference type="HGNC" id="HGNC:15483">
    <property type="gene designation" value="CDKL3"/>
</dbReference>
<dbReference type="HPA" id="ENSG00000006837">
    <property type="expression patterns" value="Tissue enhanced (testis)"/>
</dbReference>
<dbReference type="MIM" id="608459">
    <property type="type" value="gene"/>
</dbReference>
<dbReference type="neXtProt" id="NX_Q8IVW4"/>
<dbReference type="OpenTargets" id="ENSG00000006837"/>
<dbReference type="PharmGKB" id="PA26319"/>
<dbReference type="VEuPathDB" id="HostDB:ENSG00000006837"/>
<dbReference type="eggNOG" id="KOG0593">
    <property type="taxonomic scope" value="Eukaryota"/>
</dbReference>
<dbReference type="GeneTree" id="ENSGT00940000161317"/>
<dbReference type="HOGENOM" id="CLU_000288_136_1_1"/>
<dbReference type="InParanoid" id="Q8IVW4"/>
<dbReference type="OMA" id="GMEVKQV"/>
<dbReference type="OrthoDB" id="548217at2759"/>
<dbReference type="PAN-GO" id="Q8IVW4">
    <property type="GO annotations" value="6 GO annotations based on evolutionary models"/>
</dbReference>
<dbReference type="PhylomeDB" id="Q8IVW4"/>
<dbReference type="TreeFam" id="TF101031"/>
<dbReference type="PathwayCommons" id="Q8IVW4"/>
<dbReference type="SignaLink" id="Q8IVW4"/>
<dbReference type="BioGRID-ORCS" id="51265">
    <property type="hits" value="15 hits in 1179 CRISPR screens"/>
</dbReference>
<dbReference type="ChiTaRS" id="CDKL3">
    <property type="organism name" value="human"/>
</dbReference>
<dbReference type="EvolutionaryTrace" id="Q8IVW4"/>
<dbReference type="GenomeRNAi" id="51265"/>
<dbReference type="Pharos" id="Q8IVW4">
    <property type="development level" value="Tchem"/>
</dbReference>
<dbReference type="PRO" id="PR:Q8IVW4"/>
<dbReference type="Proteomes" id="UP000005640">
    <property type="component" value="Chromosome 5"/>
</dbReference>
<dbReference type="RNAct" id="Q8IVW4">
    <property type="molecule type" value="protein"/>
</dbReference>
<dbReference type="Bgee" id="ENSG00000006837">
    <property type="expression patterns" value="Expressed in male germ line stem cell (sensu Vertebrata) in testis and 116 other cell types or tissues"/>
</dbReference>
<dbReference type="ExpressionAtlas" id="Q8IVW4">
    <property type="expression patterns" value="baseline and differential"/>
</dbReference>
<dbReference type="GO" id="GO:0005737">
    <property type="term" value="C:cytoplasm"/>
    <property type="evidence" value="ECO:0007669"/>
    <property type="project" value="UniProtKB-SubCell"/>
</dbReference>
<dbReference type="GO" id="GO:0005634">
    <property type="term" value="C:nucleus"/>
    <property type="evidence" value="ECO:0000318"/>
    <property type="project" value="GO_Central"/>
</dbReference>
<dbReference type="GO" id="GO:0005524">
    <property type="term" value="F:ATP binding"/>
    <property type="evidence" value="ECO:0007669"/>
    <property type="project" value="UniProtKB-KW"/>
</dbReference>
<dbReference type="GO" id="GO:0004693">
    <property type="term" value="F:cyclin-dependent protein serine/threonine kinase activity"/>
    <property type="evidence" value="ECO:0007669"/>
    <property type="project" value="UniProtKB-EC"/>
</dbReference>
<dbReference type="GO" id="GO:0004672">
    <property type="term" value="F:protein kinase activity"/>
    <property type="evidence" value="ECO:0000304"/>
    <property type="project" value="ProtInc"/>
</dbReference>
<dbReference type="GO" id="GO:0106310">
    <property type="term" value="F:protein serine kinase activity"/>
    <property type="evidence" value="ECO:0007669"/>
    <property type="project" value="RHEA"/>
</dbReference>
<dbReference type="GO" id="GO:0004674">
    <property type="term" value="F:protein serine/threonine kinase activity"/>
    <property type="evidence" value="ECO:0000318"/>
    <property type="project" value="GO_Central"/>
</dbReference>
<dbReference type="GO" id="GO:0097484">
    <property type="term" value="P:dendrite extension"/>
    <property type="evidence" value="ECO:0000318"/>
    <property type="project" value="GO_Central"/>
</dbReference>
<dbReference type="GO" id="GO:0030517">
    <property type="term" value="P:negative regulation of axon extension"/>
    <property type="evidence" value="ECO:0000318"/>
    <property type="project" value="GO_Central"/>
</dbReference>
<dbReference type="GO" id="GO:0050775">
    <property type="term" value="P:positive regulation of dendrite morphogenesis"/>
    <property type="evidence" value="ECO:0000318"/>
    <property type="project" value="GO_Central"/>
</dbReference>
<dbReference type="GO" id="GO:0036211">
    <property type="term" value="P:protein modification process"/>
    <property type="evidence" value="ECO:0000304"/>
    <property type="project" value="ProtInc"/>
</dbReference>
<dbReference type="CDD" id="cd07846">
    <property type="entry name" value="STKc_CDKL2_3"/>
    <property type="match status" value="1"/>
</dbReference>
<dbReference type="FunFam" id="3.30.200.20:FF:000049">
    <property type="entry name" value="cyclin-dependent kinase-like 1 isoform X1"/>
    <property type="match status" value="1"/>
</dbReference>
<dbReference type="FunFam" id="1.10.510.10:FF:000370">
    <property type="entry name" value="cyclin-dependent kinase-like 3 isoform X2"/>
    <property type="match status" value="1"/>
</dbReference>
<dbReference type="Gene3D" id="3.30.200.20">
    <property type="entry name" value="Phosphorylase Kinase, domain 1"/>
    <property type="match status" value="1"/>
</dbReference>
<dbReference type="Gene3D" id="1.10.510.10">
    <property type="entry name" value="Transferase(Phosphotransferase) domain 1"/>
    <property type="match status" value="1"/>
</dbReference>
<dbReference type="InterPro" id="IPR050108">
    <property type="entry name" value="CDK"/>
</dbReference>
<dbReference type="InterPro" id="IPR011009">
    <property type="entry name" value="Kinase-like_dom_sf"/>
</dbReference>
<dbReference type="InterPro" id="IPR000719">
    <property type="entry name" value="Prot_kinase_dom"/>
</dbReference>
<dbReference type="InterPro" id="IPR017441">
    <property type="entry name" value="Protein_kinase_ATP_BS"/>
</dbReference>
<dbReference type="InterPro" id="IPR008271">
    <property type="entry name" value="Ser/Thr_kinase_AS"/>
</dbReference>
<dbReference type="PANTHER" id="PTHR24056">
    <property type="entry name" value="CELL DIVISION PROTEIN KINASE"/>
    <property type="match status" value="1"/>
</dbReference>
<dbReference type="PANTHER" id="PTHR24056:SF177">
    <property type="entry name" value="CYCLIN-DEPENDENT KINASE-LIKE 3"/>
    <property type="match status" value="1"/>
</dbReference>
<dbReference type="Pfam" id="PF00069">
    <property type="entry name" value="Pkinase"/>
    <property type="match status" value="1"/>
</dbReference>
<dbReference type="SMART" id="SM00220">
    <property type="entry name" value="S_TKc"/>
    <property type="match status" value="1"/>
</dbReference>
<dbReference type="SUPFAM" id="SSF56112">
    <property type="entry name" value="Protein kinase-like (PK-like)"/>
    <property type="match status" value="1"/>
</dbReference>
<dbReference type="PROSITE" id="PS00107">
    <property type="entry name" value="PROTEIN_KINASE_ATP"/>
    <property type="match status" value="1"/>
</dbReference>
<dbReference type="PROSITE" id="PS50011">
    <property type="entry name" value="PROTEIN_KINASE_DOM"/>
    <property type="match status" value="1"/>
</dbReference>
<dbReference type="PROSITE" id="PS00108">
    <property type="entry name" value="PROTEIN_KINASE_ST"/>
    <property type="match status" value="1"/>
</dbReference>